<sequence>MALSKNSNSNSFNKKKVSYISVPSQIINSLSSSSLQSLLVSPKKSSRSTNRFSFSYRNPRIWFFTLFLVSLFGMLKLGFNVDPISLPFSRYPCSTTQQPLSFDGEQNAASHLGLAQEPILSTGSSNSNAIIQLNGGKNETLLTEGDFWKQPDGLGFKPCLGFTSQYRKDSNSILKNRWKYLLVVVSGGMNQQRNQIVDAVVIARILGASLVVPVLQVNVIWGDESEFADIFDLEHFKDVLADDVHIVSSLPSTHVMTRPVEEKRTPLHASPQWIRAHYLKRINRERVLLLRGLDSRLSKDLPSDLQKLRCKVAFQALRFSPRILELGNKLASRMRNQGQYLSLHLRMEKDVWVRTGCLPGLTPEYDEIVNSERERHPELLTGRSNMTYHERKLAGLCPLTALEVTRLLKALEAPKDARIYWAGGEPLGGKEVLEPLTKEFPQFYNKHDLALPGELEPFANKASVMAAIDYIVCEKSDVFIPSHGGNMGHALQGQRAYAGHKKYITPNKRQMLPYFMNSSLPESDFNRIVKDLHRESLGQPELRMSKAGKDVTKHPVPECMCSDRQQQEQQSDA</sequence>
<comment type="function">
    <text evidence="5">May play a role in the biosynthesis of matrix polysaccharides and contribute to the biomechanics and development of the plant cell wall.</text>
</comment>
<comment type="pathway">
    <text evidence="6">Glycan metabolism.</text>
</comment>
<comment type="subunit">
    <text evidence="4">Interacts with RACK1A.</text>
</comment>
<comment type="subcellular location">
    <subcellularLocation>
        <location evidence="5">Golgi apparatus membrane</location>
        <topology evidence="7">Single-pass type II membrane protein</topology>
    </subcellularLocation>
</comment>
<comment type="alternative products">
    <event type="alternative splicing"/>
    <isoform>
        <id>O64884-1</id>
        <name>1</name>
        <sequence type="displayed"/>
    </isoform>
    <isoform>
        <id>O64884-2</id>
        <name>2</name>
        <sequence type="described" ref="VSP_059171 VSP_059172"/>
    </isoform>
</comment>
<comment type="tissue specificity">
    <text evidence="5">Highly expressed in shoot apical meristem (SAM) and in young vegetative tissues.</text>
</comment>
<comment type="disruption phenotype">
    <text evidence="5">Increased number of lateral roots and wider stem diameter. Altered cell wall composition with an increased level of de-esterified pectins.</text>
</comment>
<comment type="similarity">
    <text evidence="6">Belongs to the glycosyltransferase GT106 family.</text>
</comment>
<comment type="sequence caution" evidence="6">
    <conflict type="frameshift">
        <sequence resource="EMBL" id="BX819345"/>
    </conflict>
</comment>
<feature type="chain" id="PRO_0000442082" description="O-fucosyltransferase 20">
    <location>
        <begin position="1"/>
        <end position="573"/>
    </location>
</feature>
<feature type="topological domain" description="Cytoplasmic" evidence="7">
    <location>
        <begin position="1"/>
        <end position="60"/>
    </location>
</feature>
<feature type="transmembrane region" description="Helical; Signal-anchor for type II membrane protein" evidence="7">
    <location>
        <begin position="61"/>
        <end position="81"/>
    </location>
</feature>
<feature type="topological domain" description="Lumenal" evidence="7">
    <location>
        <begin position="82"/>
        <end position="573"/>
    </location>
</feature>
<feature type="region of interest" description="Disordered" evidence="3">
    <location>
        <begin position="547"/>
        <end position="573"/>
    </location>
</feature>
<feature type="compositionally biased region" description="Basic and acidic residues" evidence="3">
    <location>
        <begin position="547"/>
        <end position="556"/>
    </location>
</feature>
<feature type="compositionally biased region" description="Polar residues" evidence="3">
    <location>
        <begin position="563"/>
        <end position="573"/>
    </location>
</feature>
<feature type="binding site" evidence="1">
    <location>
        <begin position="344"/>
        <end position="346"/>
    </location>
    <ligand>
        <name>substrate</name>
    </ligand>
</feature>
<feature type="glycosylation site" description="N-linked (GlcNAc...) asparagine" evidence="2">
    <location>
        <position position="138"/>
    </location>
</feature>
<feature type="glycosylation site" description="N-linked (GlcNAc...) asparagine" evidence="2">
    <location>
        <position position="385"/>
    </location>
</feature>
<feature type="glycosylation site" description="N-linked (GlcNAc...) asparagine" evidence="2">
    <location>
        <position position="517"/>
    </location>
</feature>
<feature type="splice variant" id="VSP_059171" description="In isoform 2.">
    <original>LLKALEAPKDARIYWA</original>
    <variation>YYTNSMNKSFCLCFFK</variation>
    <location>
        <begin position="407"/>
        <end position="422"/>
    </location>
</feature>
<feature type="splice variant" id="VSP_059172" description="In isoform 2.">
    <location>
        <begin position="423"/>
        <end position="573"/>
    </location>
</feature>
<evidence type="ECO:0000250" key="1">
    <source>
        <dbReference type="UniProtKB" id="Q9H488"/>
    </source>
</evidence>
<evidence type="ECO:0000255" key="2">
    <source>
        <dbReference type="PROSITE-ProRule" id="PRU00498"/>
    </source>
</evidence>
<evidence type="ECO:0000256" key="3">
    <source>
        <dbReference type="SAM" id="MobiDB-lite"/>
    </source>
</evidence>
<evidence type="ECO:0000269" key="4">
    <source>
    </source>
</evidence>
<evidence type="ECO:0000269" key="5">
    <source ref="11"/>
</evidence>
<evidence type="ECO:0000305" key="6"/>
<evidence type="ECO:0000305" key="7">
    <source ref="11"/>
</evidence>
<evidence type="ECO:0000312" key="8">
    <source>
        <dbReference type="Araport" id="AT2G44500"/>
    </source>
</evidence>
<evidence type="ECO:0000312" key="9">
    <source>
        <dbReference type="EMBL" id="AAC16096.1"/>
    </source>
</evidence>
<protein>
    <recommendedName>
        <fullName evidence="6">O-fucosyltransferase 20</fullName>
        <shortName evidence="6">O-FucT-20</shortName>
        <ecNumber evidence="6">2.4.1.-</ecNumber>
    </recommendedName>
    <alternativeName>
        <fullName evidence="6">O-fucosyltransferase family protein</fullName>
    </alternativeName>
</protein>
<organism>
    <name type="scientific">Arabidopsis thaliana</name>
    <name type="common">Mouse-ear cress</name>
    <dbReference type="NCBI Taxonomy" id="3702"/>
    <lineage>
        <taxon>Eukaryota</taxon>
        <taxon>Viridiplantae</taxon>
        <taxon>Streptophyta</taxon>
        <taxon>Embryophyta</taxon>
        <taxon>Tracheophyta</taxon>
        <taxon>Spermatophyta</taxon>
        <taxon>Magnoliopsida</taxon>
        <taxon>eudicotyledons</taxon>
        <taxon>Gunneridae</taxon>
        <taxon>Pentapetalae</taxon>
        <taxon>rosids</taxon>
        <taxon>malvids</taxon>
        <taxon>Brassicales</taxon>
        <taxon>Brassicaceae</taxon>
        <taxon>Camelineae</taxon>
        <taxon>Arabidopsis</taxon>
    </lineage>
</organism>
<gene>
    <name evidence="6" type="primary">OFUT20</name>
    <name evidence="8" type="ordered locus">At2g44500</name>
    <name evidence="9" type="ORF">F4I1.31</name>
</gene>
<dbReference type="EC" id="2.4.1.-" evidence="6"/>
<dbReference type="EMBL" id="AC004521">
    <property type="protein sequence ID" value="AAC16096.1"/>
    <property type="molecule type" value="Genomic_DNA"/>
</dbReference>
<dbReference type="EMBL" id="CP002685">
    <property type="protein sequence ID" value="AEC10430.1"/>
    <property type="molecule type" value="Genomic_DNA"/>
</dbReference>
<dbReference type="EMBL" id="CP002685">
    <property type="protein sequence ID" value="AEC10429.1"/>
    <property type="molecule type" value="Genomic_DNA"/>
</dbReference>
<dbReference type="EMBL" id="AF370605">
    <property type="protein sequence ID" value="AAK43924.1"/>
    <property type="molecule type" value="mRNA"/>
</dbReference>
<dbReference type="EMBL" id="BX819345">
    <property type="status" value="NOT_ANNOTATED_CDS"/>
    <property type="molecule type" value="mRNA"/>
</dbReference>
<dbReference type="PIR" id="T02405">
    <property type="entry name" value="T02405"/>
</dbReference>
<dbReference type="RefSeq" id="NP_181978.1">
    <molecule id="O64884-1"/>
    <property type="nucleotide sequence ID" value="NM_130013.4"/>
</dbReference>
<dbReference type="RefSeq" id="NP_973688.1">
    <molecule id="O64884-2"/>
    <property type="nucleotide sequence ID" value="NM_201959.1"/>
</dbReference>
<dbReference type="FunCoup" id="O64884">
    <property type="interactions" value="468"/>
</dbReference>
<dbReference type="STRING" id="3702.O64884"/>
<dbReference type="GlyCosmos" id="O64884">
    <property type="glycosylation" value="3 sites, No reported glycans"/>
</dbReference>
<dbReference type="GlyGen" id="O64884">
    <property type="glycosylation" value="3 sites"/>
</dbReference>
<dbReference type="iPTMnet" id="O64884"/>
<dbReference type="PaxDb" id="3702-AT2G44500.1"/>
<dbReference type="ProteomicsDB" id="250794">
    <molecule id="O64884-1"/>
</dbReference>
<dbReference type="EnsemblPlants" id="AT2G44500.1">
    <molecule id="O64884-1"/>
    <property type="protein sequence ID" value="AT2G44500.1"/>
    <property type="gene ID" value="AT2G44500"/>
</dbReference>
<dbReference type="EnsemblPlants" id="AT2G44500.2">
    <molecule id="O64884-2"/>
    <property type="protein sequence ID" value="AT2G44500.2"/>
    <property type="gene ID" value="AT2G44500"/>
</dbReference>
<dbReference type="GeneID" id="819057"/>
<dbReference type="Gramene" id="AT2G44500.1">
    <molecule id="O64884-1"/>
    <property type="protein sequence ID" value="AT2G44500.1"/>
    <property type="gene ID" value="AT2G44500"/>
</dbReference>
<dbReference type="Gramene" id="AT2G44500.2">
    <molecule id="O64884-2"/>
    <property type="protein sequence ID" value="AT2G44500.2"/>
    <property type="gene ID" value="AT2G44500"/>
</dbReference>
<dbReference type="KEGG" id="ath:AT2G44500"/>
<dbReference type="Araport" id="AT2G44500"/>
<dbReference type="TAIR" id="AT2G44500"/>
<dbReference type="eggNOG" id="ENOG502QTBC">
    <property type="taxonomic scope" value="Eukaryota"/>
</dbReference>
<dbReference type="HOGENOM" id="CLU_018420_7_3_1"/>
<dbReference type="InParanoid" id="O64884"/>
<dbReference type="OMA" id="NMSYHDR"/>
<dbReference type="OrthoDB" id="2016498at2759"/>
<dbReference type="PhylomeDB" id="O64884"/>
<dbReference type="PRO" id="PR:O64884"/>
<dbReference type="Proteomes" id="UP000006548">
    <property type="component" value="Chromosome 2"/>
</dbReference>
<dbReference type="ExpressionAtlas" id="O64884">
    <property type="expression patterns" value="baseline and differential"/>
</dbReference>
<dbReference type="GO" id="GO:0000139">
    <property type="term" value="C:Golgi membrane"/>
    <property type="evidence" value="ECO:0007669"/>
    <property type="project" value="UniProtKB-SubCell"/>
</dbReference>
<dbReference type="GO" id="GO:0016757">
    <property type="term" value="F:glycosyltransferase activity"/>
    <property type="evidence" value="ECO:0007669"/>
    <property type="project" value="UniProtKB-KW"/>
</dbReference>
<dbReference type="GO" id="GO:0071555">
    <property type="term" value="P:cell wall organization"/>
    <property type="evidence" value="ECO:0007669"/>
    <property type="project" value="UniProtKB-KW"/>
</dbReference>
<dbReference type="GO" id="GO:0006004">
    <property type="term" value="P:fucose metabolic process"/>
    <property type="evidence" value="ECO:0007669"/>
    <property type="project" value="UniProtKB-KW"/>
</dbReference>
<dbReference type="CDD" id="cd11299">
    <property type="entry name" value="O-FucT_plant"/>
    <property type="match status" value="1"/>
</dbReference>
<dbReference type="InterPro" id="IPR024709">
    <property type="entry name" value="FucosylTrfase_pln"/>
</dbReference>
<dbReference type="InterPro" id="IPR019378">
    <property type="entry name" value="GDP-Fuc_O-FucTrfase"/>
</dbReference>
<dbReference type="PANTHER" id="PTHR31741:SF66">
    <property type="entry name" value="O-FUCOSYLTRANSFERASE 20"/>
    <property type="match status" value="1"/>
</dbReference>
<dbReference type="PANTHER" id="PTHR31741">
    <property type="entry name" value="OS02G0726500 PROTEIN-RELATED"/>
    <property type="match status" value="1"/>
</dbReference>
<dbReference type="Pfam" id="PF10250">
    <property type="entry name" value="O-FucT"/>
    <property type="match status" value="1"/>
</dbReference>
<dbReference type="PIRSF" id="PIRSF009360">
    <property type="entry name" value="UCP009360"/>
    <property type="match status" value="1"/>
</dbReference>
<reference key="1">
    <citation type="journal article" date="1999" name="Nature">
        <title>Sequence and analysis of chromosome 2 of the plant Arabidopsis thaliana.</title>
        <authorList>
            <person name="Lin X."/>
            <person name="Kaul S."/>
            <person name="Rounsley S.D."/>
            <person name="Shea T.P."/>
            <person name="Benito M.-I."/>
            <person name="Town C.D."/>
            <person name="Fujii C.Y."/>
            <person name="Mason T.M."/>
            <person name="Bowman C.L."/>
            <person name="Barnstead M.E."/>
            <person name="Feldblyum T.V."/>
            <person name="Buell C.R."/>
            <person name="Ketchum K.A."/>
            <person name="Lee J.J."/>
            <person name="Ronning C.M."/>
            <person name="Koo H.L."/>
            <person name="Moffat K.S."/>
            <person name="Cronin L.A."/>
            <person name="Shen M."/>
            <person name="Pai G."/>
            <person name="Van Aken S."/>
            <person name="Umayam L."/>
            <person name="Tallon L.J."/>
            <person name="Gill J.E."/>
            <person name="Adams M.D."/>
            <person name="Carrera A.J."/>
            <person name="Creasy T.H."/>
            <person name="Goodman H.M."/>
            <person name="Somerville C.R."/>
            <person name="Copenhaver G.P."/>
            <person name="Preuss D."/>
            <person name="Nierman W.C."/>
            <person name="White O."/>
            <person name="Eisen J.A."/>
            <person name="Salzberg S.L."/>
            <person name="Fraser C.M."/>
            <person name="Venter J.C."/>
        </authorList>
    </citation>
    <scope>NUCLEOTIDE SEQUENCE [LARGE SCALE GENOMIC DNA]</scope>
    <source>
        <strain>cv. Columbia</strain>
    </source>
</reference>
<reference key="2">
    <citation type="journal article" date="2017" name="Plant J.">
        <title>Araport11: a complete reannotation of the Arabidopsis thaliana reference genome.</title>
        <authorList>
            <person name="Cheng C.Y."/>
            <person name="Krishnakumar V."/>
            <person name="Chan A.P."/>
            <person name="Thibaud-Nissen F."/>
            <person name="Schobel S."/>
            <person name="Town C.D."/>
        </authorList>
    </citation>
    <scope>GENOME REANNOTATION</scope>
    <source>
        <strain>cv. Columbia</strain>
    </source>
</reference>
<reference key="3">
    <citation type="journal article" date="2003" name="Science">
        <title>Empirical analysis of transcriptional activity in the Arabidopsis genome.</title>
        <authorList>
            <person name="Yamada K."/>
            <person name="Lim J."/>
            <person name="Dale J.M."/>
            <person name="Chen H."/>
            <person name="Shinn P."/>
            <person name="Palm C.J."/>
            <person name="Southwick A.M."/>
            <person name="Wu H.C."/>
            <person name="Kim C.J."/>
            <person name="Nguyen M."/>
            <person name="Pham P.K."/>
            <person name="Cheuk R.F."/>
            <person name="Karlin-Newmann G."/>
            <person name="Liu S.X."/>
            <person name="Lam B."/>
            <person name="Sakano H."/>
            <person name="Wu T."/>
            <person name="Yu G."/>
            <person name="Miranda M."/>
            <person name="Quach H.L."/>
            <person name="Tripp M."/>
            <person name="Chang C.H."/>
            <person name="Lee J.M."/>
            <person name="Toriumi M.J."/>
            <person name="Chan M.M."/>
            <person name="Tang C.C."/>
            <person name="Onodera C.S."/>
            <person name="Deng J.M."/>
            <person name="Akiyama K."/>
            <person name="Ansari Y."/>
            <person name="Arakawa T."/>
            <person name="Banh J."/>
            <person name="Banno F."/>
            <person name="Bowser L."/>
            <person name="Brooks S.Y."/>
            <person name="Carninci P."/>
            <person name="Chao Q."/>
            <person name="Choy N."/>
            <person name="Enju A."/>
            <person name="Goldsmith A.D."/>
            <person name="Gurjal M."/>
            <person name="Hansen N.F."/>
            <person name="Hayashizaki Y."/>
            <person name="Johnson-Hopson C."/>
            <person name="Hsuan V.W."/>
            <person name="Iida K."/>
            <person name="Karnes M."/>
            <person name="Khan S."/>
            <person name="Koesema E."/>
            <person name="Ishida J."/>
            <person name="Jiang P.X."/>
            <person name="Jones T."/>
            <person name="Kawai J."/>
            <person name="Kamiya A."/>
            <person name="Meyers C."/>
            <person name="Nakajima M."/>
            <person name="Narusaka M."/>
            <person name="Seki M."/>
            <person name="Sakurai T."/>
            <person name="Satou M."/>
            <person name="Tamse R."/>
            <person name="Vaysberg M."/>
            <person name="Wallender E.K."/>
            <person name="Wong C."/>
            <person name="Yamamura Y."/>
            <person name="Yuan S."/>
            <person name="Shinozaki K."/>
            <person name="Davis R.W."/>
            <person name="Theologis A."/>
            <person name="Ecker J.R."/>
        </authorList>
    </citation>
    <scope>NUCLEOTIDE SEQUENCE [LARGE SCALE MRNA] (ISOFORM 1)</scope>
    <source>
        <strain>cv. Columbia</strain>
    </source>
</reference>
<reference key="4">
    <citation type="journal article" date="2004" name="Genome Res.">
        <title>Whole genome sequence comparisons and 'full-length' cDNA sequences: a combined approach to evaluate and improve Arabidopsis genome annotation.</title>
        <authorList>
            <person name="Castelli V."/>
            <person name="Aury J.-M."/>
            <person name="Jaillon O."/>
            <person name="Wincker P."/>
            <person name="Clepet C."/>
            <person name="Menard M."/>
            <person name="Cruaud C."/>
            <person name="Quetier F."/>
            <person name="Scarpelli C."/>
            <person name="Schaechter V."/>
            <person name="Temple G."/>
            <person name="Caboche M."/>
            <person name="Weissenbach J."/>
            <person name="Salanoubat M."/>
        </authorList>
    </citation>
    <scope>NUCLEOTIDE SEQUENCE [LARGE SCALE MRNA] (ISOFORM 2)</scope>
    <source>
        <strain>cv. Columbia</strain>
    </source>
</reference>
<reference key="5">
    <citation type="journal article" date="2012" name="Front. Plant Sci.">
        <title>Plant glycosyltransferases beyond CAZy: a perspective on DUF families.</title>
        <authorList>
            <person name="Hansen S.F."/>
            <person name="Harholt J."/>
            <person name="Oikawa A."/>
            <person name="Scheller H.V."/>
        </authorList>
    </citation>
    <scope>GENE FAMILY</scope>
    <scope>REVIEW</scope>
</reference>
<reference key="6">
    <citation type="journal article" date="2012" name="PLoS ONE">
        <title>The FRIABLE1 gene product affects cell adhesion in Arabidopsis.</title>
        <authorList>
            <person name="Neumetzler L."/>
            <person name="Humphrey T."/>
            <person name="Lumba S."/>
            <person name="Snyder S."/>
            <person name="Yeats T.H."/>
            <person name="Usadel B."/>
            <person name="Vasilevski A."/>
            <person name="Patel J."/>
            <person name="Rose J.K."/>
            <person name="Persson S."/>
            <person name="Bonetta D."/>
        </authorList>
    </citation>
    <scope>GENE FAMILY</scope>
</reference>
<reference key="7">
    <citation type="journal article" date="2012" name="PLoS ONE">
        <title>Identification of putative rhamnogalacturonan-II specific glycosyltransferases in Arabidopsis using a combination of bioinformatics approaches.</title>
        <authorList>
            <person name="Voxeur A."/>
            <person name="Andre A."/>
            <person name="Breton C."/>
            <person name="Lerouge P."/>
        </authorList>
    </citation>
    <scope>GENE FAMILY</scope>
</reference>
<reference key="8">
    <citation type="journal article" date="2013" name="Plant J.">
        <title>Identification of an additional protein involved in mannan biosynthesis.</title>
        <authorList>
            <person name="Wang Y."/>
            <person name="Mortimer J.C."/>
            <person name="Davis J."/>
            <person name="Dupree P."/>
            <person name="Keegstra K."/>
        </authorList>
    </citation>
    <scope>GENE FAMILY</scope>
</reference>
<reference key="9">
    <citation type="journal article" date="2013" name="Plant Signal. Behav.">
        <title>Arabidopsis scaffold protein RACK1A interacts with diverse environmental stress and photosynthesis related proteins.</title>
        <authorList>
            <person name="Kundu N."/>
            <person name="Dozier U."/>
            <person name="Deslandes L."/>
            <person name="Somssich I.E."/>
            <person name="Ullah H."/>
        </authorList>
    </citation>
    <scope>INTERACTION WITH RACK1A</scope>
</reference>
<reference key="10">
    <citation type="journal article" date="2014" name="Plant J.">
        <title>The plant glycosyltransferase clone collection for functional genomics.</title>
        <authorList>
            <person name="Lao J."/>
            <person name="Oikawa A."/>
            <person name="Bromley J.R."/>
            <person name="McInerney P."/>
            <person name="Suttangkakul A."/>
            <person name="Smith-Moritz A.M."/>
            <person name="Plahar H."/>
            <person name="Chiu T.-Y."/>
            <person name="Gonzalez Fernandez-Nino S.M.G."/>
            <person name="Ebert B."/>
            <person name="Yang F."/>
            <person name="Christiansen K.M."/>
            <person name="Hansen S.F."/>
            <person name="Stonebloom S."/>
            <person name="Adams P.D."/>
            <person name="Ronald P.C."/>
            <person name="Hillson N.J."/>
            <person name="Hadi M.Z."/>
            <person name="Vega-Sanchez M.E."/>
            <person name="Loque D."/>
            <person name="Scheller H.V."/>
            <person name="Heazlewood J.L."/>
        </authorList>
    </citation>
    <scope>WEB RESOURCE</scope>
</reference>
<reference key="11">
    <citation type="thesis" date="2016" institute="University of Guelph" country="Canada">
        <title>Molecular analysis and functional elucidation of a novel plant O-fucosyltransferase in Arabidopsis thaliana and Brassica napus.</title>
        <authorList>
            <person name="Halliday J."/>
        </authorList>
    </citation>
    <scope>TISSUE SPECIFICITY</scope>
    <scope>SUBCELLULAR LOCATION</scope>
    <scope>DISRUPTION PHENOTYPE</scope>
    <scope>FUNCTION</scope>
</reference>
<proteinExistence type="evidence at protein level"/>
<accession>O64884</accession>
<accession>F4IU48</accession>
<name>OFT20_ARATH</name>
<keyword id="KW-0025">Alternative splicing</keyword>
<keyword id="KW-0119">Carbohydrate metabolism</keyword>
<keyword id="KW-0961">Cell wall biogenesis/degradation</keyword>
<keyword id="KW-0294">Fucose metabolism</keyword>
<keyword id="KW-0325">Glycoprotein</keyword>
<keyword id="KW-0328">Glycosyltransferase</keyword>
<keyword id="KW-0333">Golgi apparatus</keyword>
<keyword id="KW-0472">Membrane</keyword>
<keyword id="KW-1185">Reference proteome</keyword>
<keyword id="KW-0735">Signal-anchor</keyword>
<keyword id="KW-0808">Transferase</keyword>
<keyword id="KW-0812">Transmembrane</keyword>
<keyword id="KW-1133">Transmembrane helix</keyword>